<feature type="chain" id="PRO_0000144872" description="Complexin-1">
    <location>
        <begin position="1"/>
        <end position="134"/>
    </location>
</feature>
<feature type="region of interest" description="Disordered" evidence="3">
    <location>
        <begin position="1"/>
        <end position="60"/>
    </location>
</feature>
<feature type="region of interest" description="Interaction with the SNARE complex">
    <location>
        <begin position="48"/>
        <end position="70"/>
    </location>
</feature>
<feature type="region of interest" description="Disordered" evidence="3">
    <location>
        <begin position="74"/>
        <end position="114"/>
    </location>
</feature>
<feature type="coiled-coil region" evidence="2">
    <location>
        <begin position="29"/>
        <end position="64"/>
    </location>
</feature>
<feature type="compositionally biased region" description="Basic and acidic residues" evidence="3">
    <location>
        <begin position="15"/>
        <end position="60"/>
    </location>
</feature>
<feature type="helix" evidence="13">
    <location>
        <begin position="52"/>
        <end position="70"/>
    </location>
</feature>
<comment type="function">
    <text evidence="1">Positively regulates a late step in exocytosis of various cytoplasmic vesicles, such as synaptic vesicles and other secretory vesicles. Organizes the SNAREs into a cross-linked zigzag topology that, when interposed between the vesicle and plasma membranes, is incompatible with fusion, thereby preventing SNAREs from releasing neurotransmitters until an action potential arrives at the synapse. Also involved in glucose-induced secretion of insulin by pancreatic beta-cells. Essential for motor behavior.</text>
</comment>
<comment type="subunit">
    <text evidence="6 7 8 9 10">Binds to the SNARE core complex containing SNAP25, VAMP2 and STX1A.</text>
</comment>
<comment type="subcellular location">
    <subcellularLocation>
        <location evidence="9 10 11">Cytoplasm</location>
        <location evidence="9 10 11">Cytosol</location>
    </subcellularLocation>
    <subcellularLocation>
        <location evidence="10">Presynapse</location>
    </subcellularLocation>
    <subcellularLocation>
        <location evidence="10">Perikaryon</location>
    </subcellularLocation>
    <text evidence="10">Enriched at synaptic-releasing sites in mature neurons.</text>
</comment>
<comment type="tissue specificity">
    <text evidence="4 5 9 10">Nervous system. Strongly expressed in brain, where it is predominant in neurons from cerebral cortex and thalamus (at protein level).</text>
</comment>
<comment type="similarity">
    <text evidence="12">Belongs to the complexin/synaphin family.</text>
</comment>
<keyword id="KW-0002">3D-structure</keyword>
<keyword id="KW-0966">Cell projection</keyword>
<keyword id="KW-0175">Coiled coil</keyword>
<keyword id="KW-0963">Cytoplasm</keyword>
<keyword id="KW-0903">Direct protein sequencing</keyword>
<keyword id="KW-0268">Exocytosis</keyword>
<keyword id="KW-0532">Neurotransmitter transport</keyword>
<keyword id="KW-1185">Reference proteome</keyword>
<keyword id="KW-0770">Synapse</keyword>
<keyword id="KW-0813">Transport</keyword>
<proteinExistence type="evidence at protein level"/>
<dbReference type="EMBL" id="U35098">
    <property type="protein sequence ID" value="AAC52270.1"/>
    <property type="molecule type" value="mRNA"/>
</dbReference>
<dbReference type="EMBL" id="D70817">
    <property type="protein sequence ID" value="BAA11097.1"/>
    <property type="molecule type" value="mRNA"/>
</dbReference>
<dbReference type="EMBL" id="BC093605">
    <property type="protein sequence ID" value="AAH93605.1"/>
    <property type="molecule type" value="mRNA"/>
</dbReference>
<dbReference type="PIR" id="A57233">
    <property type="entry name" value="A57233"/>
</dbReference>
<dbReference type="RefSeq" id="NP_074055.1">
    <property type="nucleotide sequence ID" value="NM_022864.4"/>
</dbReference>
<dbReference type="RefSeq" id="XP_006250633.1">
    <property type="nucleotide sequence ID" value="XM_006250571.3"/>
</dbReference>
<dbReference type="PDB" id="1KIL">
    <property type="method" value="X-ray"/>
    <property type="resolution" value="2.30 A"/>
    <property type="chains" value="E=26-72"/>
</dbReference>
<dbReference type="PDB" id="5W5C">
    <property type="method" value="X-ray"/>
    <property type="resolution" value="1.85 A"/>
    <property type="chains" value="E=1-83"/>
</dbReference>
<dbReference type="PDB" id="5W5D">
    <property type="method" value="X-ray"/>
    <property type="resolution" value="2.50 A"/>
    <property type="chains" value="E=1-83"/>
</dbReference>
<dbReference type="PDBsum" id="1KIL"/>
<dbReference type="PDBsum" id="5W5C"/>
<dbReference type="PDBsum" id="5W5D"/>
<dbReference type="BMRB" id="P63041"/>
<dbReference type="SMR" id="P63041"/>
<dbReference type="BioGRID" id="249210">
    <property type="interactions" value="1"/>
</dbReference>
<dbReference type="CORUM" id="P63041"/>
<dbReference type="DIP" id="DIP-35502N"/>
<dbReference type="FunCoup" id="P63041">
    <property type="interactions" value="1050"/>
</dbReference>
<dbReference type="IntAct" id="P63041">
    <property type="interactions" value="6"/>
</dbReference>
<dbReference type="MINT" id="P63041"/>
<dbReference type="STRING" id="10116.ENSRNOP00000058432"/>
<dbReference type="iPTMnet" id="P63041"/>
<dbReference type="PhosphoSitePlus" id="P63041"/>
<dbReference type="jPOST" id="P63041"/>
<dbReference type="PaxDb" id="10116-ENSRNOP00000058432"/>
<dbReference type="GeneID" id="64832"/>
<dbReference type="KEGG" id="rno:64832"/>
<dbReference type="UCSC" id="RGD:70944">
    <property type="organism name" value="rat"/>
</dbReference>
<dbReference type="AGR" id="RGD:70944"/>
<dbReference type="CTD" id="10815"/>
<dbReference type="RGD" id="70944">
    <property type="gene designation" value="Cplx1"/>
</dbReference>
<dbReference type="VEuPathDB" id="HostDB:ENSRNOG00000000048"/>
<dbReference type="eggNOG" id="ENOG502S3I2">
    <property type="taxonomic scope" value="Eukaryota"/>
</dbReference>
<dbReference type="HOGENOM" id="CLU_132159_1_0_1"/>
<dbReference type="InParanoid" id="P63041"/>
<dbReference type="PhylomeDB" id="P63041"/>
<dbReference type="TreeFam" id="TF315172"/>
<dbReference type="Reactome" id="R-RNO-181429">
    <property type="pathway name" value="Serotonin Neurotransmitter Release Cycle"/>
</dbReference>
<dbReference type="Reactome" id="R-RNO-181430">
    <property type="pathway name" value="Norepinephrine Neurotransmitter Release Cycle"/>
</dbReference>
<dbReference type="Reactome" id="R-RNO-210500">
    <property type="pathway name" value="Glutamate Neurotransmitter Release Cycle"/>
</dbReference>
<dbReference type="Reactome" id="R-RNO-212676">
    <property type="pathway name" value="Dopamine Neurotransmitter Release Cycle"/>
</dbReference>
<dbReference type="Reactome" id="R-RNO-264642">
    <property type="pathway name" value="Acetylcholine Neurotransmitter Release Cycle"/>
</dbReference>
<dbReference type="Reactome" id="R-RNO-888590">
    <property type="pathway name" value="GABA synthesis, release, reuptake and degradation"/>
</dbReference>
<dbReference type="PRO" id="PR:P63041"/>
<dbReference type="Proteomes" id="UP000002494">
    <property type="component" value="Chromosome 14"/>
</dbReference>
<dbReference type="Bgee" id="ENSRNOG00000000060">
    <property type="expression patterns" value="Expressed in cerebellum and 18 other cell types or tissues"/>
</dbReference>
<dbReference type="GO" id="GO:0044305">
    <property type="term" value="C:calyx of Held"/>
    <property type="evidence" value="ECO:0000266"/>
    <property type="project" value="RGD"/>
</dbReference>
<dbReference type="GO" id="GO:0005829">
    <property type="term" value="C:cytosol"/>
    <property type="evidence" value="ECO:0007669"/>
    <property type="project" value="UniProtKB-SubCell"/>
</dbReference>
<dbReference type="GO" id="GO:0030425">
    <property type="term" value="C:dendrite"/>
    <property type="evidence" value="ECO:0000314"/>
    <property type="project" value="MGI"/>
</dbReference>
<dbReference type="GO" id="GO:0098978">
    <property type="term" value="C:glutamatergic synapse"/>
    <property type="evidence" value="ECO:0000266"/>
    <property type="project" value="RGD"/>
</dbReference>
<dbReference type="GO" id="GO:0043025">
    <property type="term" value="C:neuronal cell body"/>
    <property type="evidence" value="ECO:0000314"/>
    <property type="project" value="MGI"/>
</dbReference>
<dbReference type="GO" id="GO:0043204">
    <property type="term" value="C:perikaryon"/>
    <property type="evidence" value="ECO:0007669"/>
    <property type="project" value="UniProtKB-SubCell"/>
</dbReference>
<dbReference type="GO" id="GO:0098794">
    <property type="term" value="C:postsynapse"/>
    <property type="evidence" value="ECO:0000314"/>
    <property type="project" value="SynGO"/>
</dbReference>
<dbReference type="GO" id="GO:0098793">
    <property type="term" value="C:presynapse"/>
    <property type="evidence" value="ECO:0000314"/>
    <property type="project" value="SynGO"/>
</dbReference>
<dbReference type="GO" id="GO:0032991">
    <property type="term" value="C:protein-containing complex"/>
    <property type="evidence" value="ECO:0000314"/>
    <property type="project" value="RGD"/>
</dbReference>
<dbReference type="GO" id="GO:0098685">
    <property type="term" value="C:Schaffer collateral - CA1 synapse"/>
    <property type="evidence" value="ECO:0000266"/>
    <property type="project" value="RGD"/>
</dbReference>
<dbReference type="GO" id="GO:0031201">
    <property type="term" value="C:SNARE complex"/>
    <property type="evidence" value="ECO:0000266"/>
    <property type="project" value="RGD"/>
</dbReference>
<dbReference type="GO" id="GO:0045202">
    <property type="term" value="C:synapse"/>
    <property type="evidence" value="ECO:0000314"/>
    <property type="project" value="MGI"/>
</dbReference>
<dbReference type="GO" id="GO:0070032">
    <property type="term" value="C:synaptobrevin 2-SNAP-25-syntaxin-1a-complexin I complex"/>
    <property type="evidence" value="ECO:0000314"/>
    <property type="project" value="MGI"/>
</dbReference>
<dbReference type="GO" id="GO:0043195">
    <property type="term" value="C:terminal bouton"/>
    <property type="evidence" value="ECO:0007005"/>
    <property type="project" value="ParkinsonsUK-UCL"/>
</dbReference>
<dbReference type="GO" id="GO:0008289">
    <property type="term" value="F:lipid binding"/>
    <property type="evidence" value="ECO:0000266"/>
    <property type="project" value="RGD"/>
</dbReference>
<dbReference type="GO" id="GO:0000149">
    <property type="term" value="F:SNARE binding"/>
    <property type="evidence" value="ECO:0000314"/>
    <property type="project" value="RGD"/>
</dbReference>
<dbReference type="GO" id="GO:0017075">
    <property type="term" value="F:syntaxin-1 binding"/>
    <property type="evidence" value="ECO:0000314"/>
    <property type="project" value="MGI"/>
</dbReference>
<dbReference type="GO" id="GO:0030073">
    <property type="term" value="P:insulin secretion"/>
    <property type="evidence" value="ECO:0000266"/>
    <property type="project" value="RGD"/>
</dbReference>
<dbReference type="GO" id="GO:0050804">
    <property type="term" value="P:modulation of chemical synaptic transmission"/>
    <property type="evidence" value="ECO:0000318"/>
    <property type="project" value="GO_Central"/>
</dbReference>
<dbReference type="GO" id="GO:0099145">
    <property type="term" value="P:regulation of exocytic insertion of neurotransmitter receptor to postsynaptic membrane"/>
    <property type="evidence" value="ECO:0000266"/>
    <property type="project" value="RGD"/>
</dbReference>
<dbReference type="GO" id="GO:0031630">
    <property type="term" value="P:regulation of synaptic vesicle fusion to presynaptic active zone membrane"/>
    <property type="evidence" value="ECO:0000266"/>
    <property type="project" value="RGD"/>
</dbReference>
<dbReference type="GO" id="GO:0016079">
    <property type="term" value="P:synaptic vesicle exocytosis"/>
    <property type="evidence" value="ECO:0000314"/>
    <property type="project" value="RGD"/>
</dbReference>
<dbReference type="CDD" id="cd22740">
    <property type="entry name" value="Complexin_NTD"/>
    <property type="match status" value="1"/>
</dbReference>
<dbReference type="FunFam" id="1.20.5.580:FF:000001">
    <property type="entry name" value="Complexin 2"/>
    <property type="match status" value="1"/>
</dbReference>
<dbReference type="Gene3D" id="1.20.5.580">
    <property type="entry name" value="Single Helix bin"/>
    <property type="match status" value="1"/>
</dbReference>
<dbReference type="InterPro" id="IPR008849">
    <property type="entry name" value="Synaphin"/>
</dbReference>
<dbReference type="PANTHER" id="PTHR16705">
    <property type="entry name" value="COMPLEXIN"/>
    <property type="match status" value="1"/>
</dbReference>
<dbReference type="PANTHER" id="PTHR16705:SF6">
    <property type="entry name" value="COMPLEXIN-1"/>
    <property type="match status" value="1"/>
</dbReference>
<dbReference type="Pfam" id="PF05835">
    <property type="entry name" value="Synaphin"/>
    <property type="match status" value="1"/>
</dbReference>
<dbReference type="SUPFAM" id="SSF58038">
    <property type="entry name" value="SNARE fusion complex"/>
    <property type="match status" value="1"/>
</dbReference>
<sequence>MEFVMKQALGGATKDMGKMLGGDEEKDPDAAKKEEERQEALRQAEEERKAKYAKMEAEREVMRQGIRDKYGIKKKEEREAEAQAAMEANSEGSLTRPKKAIPPGCGDEPEEEDESILDTVIKYLPGPLQDMFKK</sequence>
<accession>P63041</accession>
<accession>O09057</accession>
<accession>O09142</accession>
<accession>Q566D7</accession>
<accession>Q64276</accession>
<name>CPLX1_RAT</name>
<gene>
    <name type="primary">Cplx1</name>
</gene>
<reference key="1">
    <citation type="journal article" date="1995" name="Cell">
        <title>Complexins: cytosolic proteins that regulate SNAP receptor function.</title>
        <authorList>
            <person name="McMahon H.T."/>
            <person name="Missler M."/>
            <person name="Li C."/>
            <person name="Suedhof T.C."/>
        </authorList>
    </citation>
    <scope>NUCLEOTIDE SEQUENCE [MRNA]</scope>
    <scope>PROTEIN SEQUENCE OF 19-49; 55-69 AND 74-96</scope>
    <scope>TISSUE SPECIFICITY</scope>
    <scope>SUBCELLULAR LOCATION</scope>
    <scope>SUBUNIT</scope>
    <source>
        <tissue>Brain</tissue>
    </source>
</reference>
<reference key="2">
    <citation type="journal article" date="1999" name="Neuroscience">
        <title>Distinct regional distribution in the brain of messenger RNAs for the two isoforms of synaphin associated with the docking/fusion complex.</title>
        <authorList>
            <person name="Ishizuka T."/>
            <person name="Saisu H."/>
            <person name="Odani S."/>
            <person name="Kumanishi T."/>
            <person name="Abe T."/>
        </authorList>
    </citation>
    <scope>NUCLEOTIDE SEQUENCE [MRNA]</scope>
    <scope>TISSUE SPECIFICITY</scope>
    <source>
        <strain>Sprague-Dawley</strain>
        <tissue>Brain</tissue>
    </source>
</reference>
<reference key="3">
    <citation type="journal article" date="2004" name="Genome Res.">
        <title>The status, quality, and expansion of the NIH full-length cDNA project: the Mammalian Gene Collection (MGC).</title>
        <authorList>
            <consortium name="The MGC Project Team"/>
        </authorList>
    </citation>
    <scope>NUCLEOTIDE SEQUENCE [LARGE SCALE MRNA]</scope>
    <source>
        <tissue>Brain</tissue>
    </source>
</reference>
<reference key="4">
    <citation type="journal article" date="1998" name="Eur. J. Neurosci.">
        <title>Regulatory roles of complexins in neurotransmitter release from mature presynaptic nerve terminals.</title>
        <authorList>
            <person name="Ono S."/>
            <person name="Baux G."/>
            <person name="Sekiguchi M."/>
            <person name="Fossier P."/>
            <person name="Morel N.F."/>
            <person name="Nihonmatsu I."/>
            <person name="Hirata K."/>
            <person name="Awaji T."/>
            <person name="Takahashi S."/>
            <person name="Takahashi M."/>
        </authorList>
    </citation>
    <scope>SUBCELLULAR LOCATION</scope>
</reference>
<reference key="5">
    <citation type="journal article" date="1999" name="Neuroscience">
        <title>Immunohistochemical distribution of the two isoforms of synaphin/complexin involved in neurotransmitter release: localization at the distinct central nervous system regions and synaptic types.</title>
        <authorList>
            <person name="Yamada M."/>
            <person name="Saisu H."/>
            <person name="Ishizuka T."/>
            <person name="Takahashi H."/>
            <person name="Abe T."/>
        </authorList>
    </citation>
    <scope>TISSUE SPECIFICITY</scope>
</reference>
<reference key="6">
    <citation type="journal article" date="2000" name="J. Biol. Chem.">
        <title>Selective interaction of complexin with the neuronal SNARE complex. Determination of the binding regions.</title>
        <authorList>
            <person name="Pabst S."/>
            <person name="Hazzard J.W."/>
            <person name="Antonin W."/>
            <person name="Suedhof T.C."/>
            <person name="Jahn R."/>
            <person name="Rizo J."/>
            <person name="Fasshauer D."/>
        </authorList>
    </citation>
    <scope>SUBUNIT</scope>
</reference>
<reference key="7">
    <citation type="journal article" date="2002" name="J. Biol. Chem.">
        <title>Rapid and selective binding to the synaptic SNARE complex suggests a modulatory role of complexins in neuroexocytosis.</title>
        <authorList>
            <person name="Pabst S."/>
            <person name="Margittai M."/>
            <person name="Vainius D."/>
            <person name="Langen R."/>
            <person name="Jahn R."/>
            <person name="Fasshauer D."/>
        </authorList>
    </citation>
    <scope>SUBUNIT</scope>
</reference>
<reference key="8">
    <citation type="journal article" date="2005" name="J. Cell Biol.">
        <title>Structurally and functionally unique complexins at retinal ribbon synapses.</title>
        <authorList>
            <person name="Reim K."/>
            <person name="Wegmeyer H."/>
            <person name="Brandstaetter J.H."/>
            <person name="Xue M."/>
            <person name="Rosenmund C."/>
            <person name="Dresbach T."/>
            <person name="Hofmann K."/>
            <person name="Brose N."/>
        </authorList>
    </citation>
    <scope>SUBUNIT</scope>
    <scope>TISSUE SPECIFICITY</scope>
    <scope>SUBCELLULAR LOCATION</scope>
</reference>
<reference key="9">
    <citation type="journal article" date="2002" name="Neuron">
        <title>Three-dimensional structure of the complexin/SNARE complex.</title>
        <authorList>
            <person name="Chen X."/>
            <person name="Tomchick D.R."/>
            <person name="Kovrigin E."/>
            <person name="Arac D."/>
            <person name="Machius M."/>
            <person name="Suedhof T.C."/>
            <person name="Rizo J."/>
        </authorList>
    </citation>
    <scope>X-RAY CRYSTALLOGRAPHY (2.3 ANGSTROMS) OF 26-83 IN COMPLEX WITH STX1A; SNAP25 AND VAMP2</scope>
    <scope>STRUCTURE BY NMR</scope>
</reference>
<evidence type="ECO:0000250" key="1">
    <source>
        <dbReference type="UniProtKB" id="P63040"/>
    </source>
</evidence>
<evidence type="ECO:0000255" key="2"/>
<evidence type="ECO:0000256" key="3">
    <source>
        <dbReference type="SAM" id="MobiDB-lite"/>
    </source>
</evidence>
<evidence type="ECO:0000269" key="4">
    <source>
    </source>
</evidence>
<evidence type="ECO:0000269" key="5">
    <source>
    </source>
</evidence>
<evidence type="ECO:0000269" key="6">
    <source>
    </source>
</evidence>
<evidence type="ECO:0000269" key="7">
    <source>
    </source>
</evidence>
<evidence type="ECO:0000269" key="8">
    <source>
    </source>
</evidence>
<evidence type="ECO:0000269" key="9">
    <source>
    </source>
</evidence>
<evidence type="ECO:0000269" key="10">
    <source>
    </source>
</evidence>
<evidence type="ECO:0000269" key="11">
    <source>
    </source>
</evidence>
<evidence type="ECO:0000305" key="12"/>
<evidence type="ECO:0007829" key="13">
    <source>
        <dbReference type="PDB" id="5W5C"/>
    </source>
</evidence>
<organism>
    <name type="scientific">Rattus norvegicus</name>
    <name type="common">Rat</name>
    <dbReference type="NCBI Taxonomy" id="10116"/>
    <lineage>
        <taxon>Eukaryota</taxon>
        <taxon>Metazoa</taxon>
        <taxon>Chordata</taxon>
        <taxon>Craniata</taxon>
        <taxon>Vertebrata</taxon>
        <taxon>Euteleostomi</taxon>
        <taxon>Mammalia</taxon>
        <taxon>Eutheria</taxon>
        <taxon>Euarchontoglires</taxon>
        <taxon>Glires</taxon>
        <taxon>Rodentia</taxon>
        <taxon>Myomorpha</taxon>
        <taxon>Muroidea</taxon>
        <taxon>Muridae</taxon>
        <taxon>Murinae</taxon>
        <taxon>Rattus</taxon>
    </lineage>
</organism>
<protein>
    <recommendedName>
        <fullName>Complexin-1</fullName>
    </recommendedName>
    <alternativeName>
        <fullName>Complexin I</fullName>
        <shortName>CPX I</shortName>
    </alternativeName>
    <alternativeName>
        <fullName>Synaphin-2</fullName>
    </alternativeName>
</protein>